<evidence type="ECO:0000255" key="1">
    <source>
        <dbReference type="PROSITE-ProRule" id="PRU01165"/>
    </source>
</evidence>
<evidence type="ECO:0000269" key="2">
    <source>
    </source>
</evidence>
<evidence type="ECO:0000305" key="3"/>
<evidence type="ECO:0000305" key="4">
    <source>
    </source>
</evidence>
<feature type="chain" id="PRO_0000435921" description="Probable velvet family sexual development regulator CC1G_12219">
    <location>
        <begin position="1"/>
        <end position="165"/>
    </location>
</feature>
<feature type="domain" description="Velvet" evidence="1">
    <location>
        <begin position="1"/>
        <end position="121"/>
    </location>
</feature>
<reference key="1">
    <citation type="journal article" date="2010" name="Proc. Natl. Acad. Sci. U.S.A.">
        <title>Insights into evolution of multicellular fungi from the assembled chromosomes of the mushroom Coprinopsis cinerea (Coprinus cinereus).</title>
        <authorList>
            <person name="Stajich J.E."/>
            <person name="Wilke S.K."/>
            <person name="Ahren D."/>
            <person name="Au C.H."/>
            <person name="Birren B.W."/>
            <person name="Borodovsky M."/>
            <person name="Burns C."/>
            <person name="Canbaeck B."/>
            <person name="Casselton L.A."/>
            <person name="Cheng C.K."/>
            <person name="Deng J."/>
            <person name="Dietrich F.S."/>
            <person name="Fargo D.C."/>
            <person name="Farman M.L."/>
            <person name="Gathman A.C."/>
            <person name="Goldberg J."/>
            <person name="Guigo R."/>
            <person name="Hoegger P.J."/>
            <person name="Hooker J.B."/>
            <person name="Huggins A."/>
            <person name="James T.Y."/>
            <person name="Kamada T."/>
            <person name="Kilaru S."/>
            <person name="Kodira C."/>
            <person name="Kuees U."/>
            <person name="Kupfer D."/>
            <person name="Kwan H.S."/>
            <person name="Lomsadze A."/>
            <person name="Li W."/>
            <person name="Lilly W.W."/>
            <person name="Ma L.-J."/>
            <person name="Mackey A.J."/>
            <person name="Manning G."/>
            <person name="Martin F."/>
            <person name="Muraguchi H."/>
            <person name="Natvig D.O."/>
            <person name="Palmerini H."/>
            <person name="Ramesh M.A."/>
            <person name="Rehmeyer C.J."/>
            <person name="Roe B.A."/>
            <person name="Shenoy N."/>
            <person name="Stanke M."/>
            <person name="Ter-Hovhannisyan V."/>
            <person name="Tunlid A."/>
            <person name="Velagapudi R."/>
            <person name="Vision T.J."/>
            <person name="Zeng Q."/>
            <person name="Zolan M.E."/>
            <person name="Pukkila P.J."/>
        </authorList>
    </citation>
    <scope>NUCLEOTIDE SEQUENCE [LARGE SCALE GENOMIC DNA]</scope>
    <source>
        <strain>Okayama-7 / 130 / ATCC MYA-4618 / FGSC 9003</strain>
    </source>
</reference>
<reference key="2">
    <citation type="journal article" date="2014" name="BMC Genomics">
        <title>Comparative transcriptomics of the model mushroom Coprinopsis cinerea reveals tissue-specific armories and a conserved circuitry for sexual development.</title>
        <authorList>
            <person name="Plaza D.F."/>
            <person name="Lin C.W."/>
            <person name="van der Velden N.S."/>
            <person name="Aebi M."/>
            <person name="Kuenzler M."/>
        </authorList>
    </citation>
    <scope>INDUCTION</scope>
</reference>
<name>VEL_COPC7</name>
<organism>
    <name type="scientific">Coprinopsis cinerea (strain Okayama-7 / 130 / ATCC MYA-4618 / FGSC 9003)</name>
    <name type="common">Inky cap fungus</name>
    <name type="synonym">Hormographiella aspergillata</name>
    <dbReference type="NCBI Taxonomy" id="240176"/>
    <lineage>
        <taxon>Eukaryota</taxon>
        <taxon>Fungi</taxon>
        <taxon>Dikarya</taxon>
        <taxon>Basidiomycota</taxon>
        <taxon>Agaricomycotina</taxon>
        <taxon>Agaricomycetes</taxon>
        <taxon>Agaricomycetidae</taxon>
        <taxon>Agaricales</taxon>
        <taxon>Agaricineae</taxon>
        <taxon>Psathyrellaceae</taxon>
        <taxon>Coprinopsis</taxon>
    </lineage>
</organism>
<keyword id="KW-0539">Nucleus</keyword>
<keyword id="KW-1185">Reference proteome</keyword>
<keyword id="KW-0749">Sporulation</keyword>
<keyword id="KW-0804">Transcription</keyword>
<keyword id="KW-0805">Transcription regulation</keyword>
<protein>
    <recommendedName>
        <fullName evidence="3">Probable velvet family sexual development regulator CC1G_12219</fullName>
    </recommendedName>
</protein>
<comment type="function">
    <text evidence="4">Velvet-domain-containing protein that probably acts as a positive regulator of sexual development.</text>
</comment>
<comment type="subcellular location">
    <subcellularLocation>
        <location evidence="3">Nucleus</location>
    </subcellularLocation>
</comment>
<comment type="induction">
    <text evidence="2">Expression is up-regulated during fruiting body formation (PubMed:24942908).</text>
</comment>
<comment type="similarity">
    <text evidence="3">Belongs to the velvet family.</text>
</comment>
<dbReference type="EMBL" id="AACS02000007">
    <property type="protein sequence ID" value="EAU90108.2"/>
    <property type="molecule type" value="Genomic_DNA"/>
</dbReference>
<dbReference type="RefSeq" id="XP_001831699.2">
    <property type="nucleotide sequence ID" value="XM_001831647.2"/>
</dbReference>
<dbReference type="STRING" id="240176.A8NA43"/>
<dbReference type="GeneID" id="6008181"/>
<dbReference type="KEGG" id="cci:CC1G_12219"/>
<dbReference type="VEuPathDB" id="FungiDB:CC1G_12219"/>
<dbReference type="HOGENOM" id="CLU_1610677_0_0_1"/>
<dbReference type="InParanoid" id="A8NA43"/>
<dbReference type="OMA" id="PICVDYL"/>
<dbReference type="OrthoDB" id="5599552at2759"/>
<dbReference type="Proteomes" id="UP000001861">
    <property type="component" value="Unassembled WGS sequence"/>
</dbReference>
<dbReference type="GO" id="GO:0005634">
    <property type="term" value="C:nucleus"/>
    <property type="evidence" value="ECO:0007669"/>
    <property type="project" value="UniProtKB-SubCell"/>
</dbReference>
<dbReference type="GO" id="GO:0030435">
    <property type="term" value="P:sporulation resulting in formation of a cellular spore"/>
    <property type="evidence" value="ECO:0007669"/>
    <property type="project" value="UniProtKB-KW"/>
</dbReference>
<dbReference type="Gene3D" id="2.60.40.3960">
    <property type="entry name" value="Velvet domain"/>
    <property type="match status" value="1"/>
</dbReference>
<dbReference type="InterPro" id="IPR021740">
    <property type="entry name" value="Velvet"/>
</dbReference>
<dbReference type="InterPro" id="IPR037525">
    <property type="entry name" value="Velvet_dom"/>
</dbReference>
<dbReference type="InterPro" id="IPR038491">
    <property type="entry name" value="Velvet_dom_sf"/>
</dbReference>
<dbReference type="PANTHER" id="PTHR33572">
    <property type="entry name" value="SPORE DEVELOPMENT REGULATOR VOSA"/>
    <property type="match status" value="1"/>
</dbReference>
<dbReference type="PANTHER" id="PTHR33572:SF3">
    <property type="entry name" value="VELVET COMPLEX SUBUNIT B"/>
    <property type="match status" value="1"/>
</dbReference>
<dbReference type="Pfam" id="PF11754">
    <property type="entry name" value="Velvet"/>
    <property type="match status" value="1"/>
</dbReference>
<dbReference type="PROSITE" id="PS51821">
    <property type="entry name" value="VELVET"/>
    <property type="match status" value="1"/>
</dbReference>
<proteinExistence type="evidence at transcript level"/>
<sequence>MSNTDAQTSFASLVVGPPVTDPINPLMGATSISPNLIELHGRKALVFAFGNLAVRAEGDFVLRYRVADILAGTGIDGVFPIQAICYGGPFHVFSTKDFPGYEASTELTKTLSVWGAQVNVREHRRRRRGKKDAAPAVTKPLYTTAPLDRDIVADSERRRRRRAGY</sequence>
<gene>
    <name type="ORF">CC1G_12219</name>
</gene>
<accession>A8NA43</accession>